<name>GCH1_ECO24</name>
<keyword id="KW-0342">GTP-binding</keyword>
<keyword id="KW-0378">Hydrolase</keyword>
<keyword id="KW-0479">Metal-binding</keyword>
<keyword id="KW-0547">Nucleotide-binding</keyword>
<keyword id="KW-0554">One-carbon metabolism</keyword>
<keyword id="KW-1185">Reference proteome</keyword>
<keyword id="KW-0862">Zinc</keyword>
<gene>
    <name evidence="2" type="primary">folE</name>
    <name type="ordered locus">EcE24377A_2449</name>
</gene>
<reference key="1">
    <citation type="journal article" date="2008" name="J. Bacteriol.">
        <title>The pangenome structure of Escherichia coli: comparative genomic analysis of E. coli commensal and pathogenic isolates.</title>
        <authorList>
            <person name="Rasko D.A."/>
            <person name="Rosovitz M.J."/>
            <person name="Myers G.S.A."/>
            <person name="Mongodin E.F."/>
            <person name="Fricke W.F."/>
            <person name="Gajer P."/>
            <person name="Crabtree J."/>
            <person name="Sebaihia M."/>
            <person name="Thomson N.R."/>
            <person name="Chaudhuri R."/>
            <person name="Henderson I.R."/>
            <person name="Sperandio V."/>
            <person name="Ravel J."/>
        </authorList>
    </citation>
    <scope>NUCLEOTIDE SEQUENCE [LARGE SCALE GENOMIC DNA]</scope>
    <source>
        <strain>E24377A / ETEC</strain>
    </source>
</reference>
<protein>
    <recommendedName>
        <fullName evidence="2">GTP cyclohydrolase 1</fullName>
        <ecNumber evidence="2">3.5.4.16</ecNumber>
    </recommendedName>
    <alternativeName>
        <fullName evidence="2">GTP cyclohydrolase I</fullName>
        <shortName evidence="2">GTP-CH-I</shortName>
    </alternativeName>
</protein>
<dbReference type="EC" id="3.5.4.16" evidence="2"/>
<dbReference type="EMBL" id="CP000800">
    <property type="protein sequence ID" value="ABV18852.1"/>
    <property type="molecule type" value="Genomic_DNA"/>
</dbReference>
<dbReference type="RefSeq" id="WP_001139613.1">
    <property type="nucleotide sequence ID" value="NC_009801.1"/>
</dbReference>
<dbReference type="SMR" id="A7ZNX6"/>
<dbReference type="GeneID" id="93775029"/>
<dbReference type="KEGG" id="ecw:EcE24377A_2449"/>
<dbReference type="HOGENOM" id="CLU_049768_3_2_6"/>
<dbReference type="UniPathway" id="UPA00848">
    <property type="reaction ID" value="UER00151"/>
</dbReference>
<dbReference type="Proteomes" id="UP000001122">
    <property type="component" value="Chromosome"/>
</dbReference>
<dbReference type="GO" id="GO:0005737">
    <property type="term" value="C:cytoplasm"/>
    <property type="evidence" value="ECO:0007669"/>
    <property type="project" value="TreeGrafter"/>
</dbReference>
<dbReference type="GO" id="GO:0005525">
    <property type="term" value="F:GTP binding"/>
    <property type="evidence" value="ECO:0007669"/>
    <property type="project" value="UniProtKB-KW"/>
</dbReference>
<dbReference type="GO" id="GO:0003934">
    <property type="term" value="F:GTP cyclohydrolase I activity"/>
    <property type="evidence" value="ECO:0007669"/>
    <property type="project" value="UniProtKB-UniRule"/>
</dbReference>
<dbReference type="GO" id="GO:0008270">
    <property type="term" value="F:zinc ion binding"/>
    <property type="evidence" value="ECO:0007669"/>
    <property type="project" value="UniProtKB-UniRule"/>
</dbReference>
<dbReference type="GO" id="GO:0006730">
    <property type="term" value="P:one-carbon metabolic process"/>
    <property type="evidence" value="ECO:0007669"/>
    <property type="project" value="UniProtKB-UniRule"/>
</dbReference>
<dbReference type="GO" id="GO:0006729">
    <property type="term" value="P:tetrahydrobiopterin biosynthetic process"/>
    <property type="evidence" value="ECO:0007669"/>
    <property type="project" value="TreeGrafter"/>
</dbReference>
<dbReference type="GO" id="GO:0046654">
    <property type="term" value="P:tetrahydrofolate biosynthetic process"/>
    <property type="evidence" value="ECO:0007669"/>
    <property type="project" value="UniProtKB-UniRule"/>
</dbReference>
<dbReference type="CDD" id="cd00642">
    <property type="entry name" value="GTP_cyclohydro1"/>
    <property type="match status" value="1"/>
</dbReference>
<dbReference type="FunFam" id="1.10.286.10:FF:000002">
    <property type="entry name" value="GTP cyclohydrolase 1"/>
    <property type="match status" value="1"/>
</dbReference>
<dbReference type="FunFam" id="3.30.1130.10:FF:000001">
    <property type="entry name" value="GTP cyclohydrolase 1"/>
    <property type="match status" value="1"/>
</dbReference>
<dbReference type="Gene3D" id="1.10.286.10">
    <property type="match status" value="1"/>
</dbReference>
<dbReference type="Gene3D" id="3.30.1130.10">
    <property type="match status" value="1"/>
</dbReference>
<dbReference type="HAMAP" id="MF_00223">
    <property type="entry name" value="FolE"/>
    <property type="match status" value="1"/>
</dbReference>
<dbReference type="InterPro" id="IPR043133">
    <property type="entry name" value="GTP-CH-I_C/QueF"/>
</dbReference>
<dbReference type="InterPro" id="IPR043134">
    <property type="entry name" value="GTP-CH-I_N"/>
</dbReference>
<dbReference type="InterPro" id="IPR001474">
    <property type="entry name" value="GTP_CycHdrlase_I"/>
</dbReference>
<dbReference type="InterPro" id="IPR018234">
    <property type="entry name" value="GTP_CycHdrlase_I_CS"/>
</dbReference>
<dbReference type="InterPro" id="IPR020602">
    <property type="entry name" value="GTP_CycHdrlase_I_dom"/>
</dbReference>
<dbReference type="NCBIfam" id="TIGR00063">
    <property type="entry name" value="folE"/>
    <property type="match status" value="1"/>
</dbReference>
<dbReference type="NCBIfam" id="NF006824">
    <property type="entry name" value="PRK09347.1-1"/>
    <property type="match status" value="1"/>
</dbReference>
<dbReference type="NCBIfam" id="NF006826">
    <property type="entry name" value="PRK09347.1-3"/>
    <property type="match status" value="1"/>
</dbReference>
<dbReference type="PANTHER" id="PTHR11109:SF7">
    <property type="entry name" value="GTP CYCLOHYDROLASE 1"/>
    <property type="match status" value="1"/>
</dbReference>
<dbReference type="PANTHER" id="PTHR11109">
    <property type="entry name" value="GTP CYCLOHYDROLASE I"/>
    <property type="match status" value="1"/>
</dbReference>
<dbReference type="Pfam" id="PF01227">
    <property type="entry name" value="GTP_cyclohydroI"/>
    <property type="match status" value="1"/>
</dbReference>
<dbReference type="SUPFAM" id="SSF55620">
    <property type="entry name" value="Tetrahydrobiopterin biosynthesis enzymes-like"/>
    <property type="match status" value="1"/>
</dbReference>
<dbReference type="PROSITE" id="PS00859">
    <property type="entry name" value="GTP_CYCLOHYDROL_1_1"/>
    <property type="match status" value="1"/>
</dbReference>
<dbReference type="PROSITE" id="PS00860">
    <property type="entry name" value="GTP_CYCLOHYDROL_1_2"/>
    <property type="match status" value="1"/>
</dbReference>
<organism>
    <name type="scientific">Escherichia coli O139:H28 (strain E24377A / ETEC)</name>
    <dbReference type="NCBI Taxonomy" id="331111"/>
    <lineage>
        <taxon>Bacteria</taxon>
        <taxon>Pseudomonadati</taxon>
        <taxon>Pseudomonadota</taxon>
        <taxon>Gammaproteobacteria</taxon>
        <taxon>Enterobacterales</taxon>
        <taxon>Enterobacteriaceae</taxon>
        <taxon>Escherichia</taxon>
    </lineage>
</organism>
<comment type="catalytic activity">
    <reaction evidence="2">
        <text>GTP + H2O = 7,8-dihydroneopterin 3'-triphosphate + formate + H(+)</text>
        <dbReference type="Rhea" id="RHEA:17473"/>
        <dbReference type="ChEBI" id="CHEBI:15377"/>
        <dbReference type="ChEBI" id="CHEBI:15378"/>
        <dbReference type="ChEBI" id="CHEBI:15740"/>
        <dbReference type="ChEBI" id="CHEBI:37565"/>
        <dbReference type="ChEBI" id="CHEBI:58462"/>
        <dbReference type="EC" id="3.5.4.16"/>
    </reaction>
</comment>
<comment type="pathway">
    <text evidence="2">Cofactor biosynthesis; 7,8-dihydroneopterin triphosphate biosynthesis; 7,8-dihydroneopterin triphosphate from GTP: step 1/1.</text>
</comment>
<comment type="subunit">
    <text evidence="1">Toroid-shaped homodecamer, composed of two pentamers of five dimers.</text>
</comment>
<comment type="similarity">
    <text evidence="2">Belongs to the GTP cyclohydrolase I family.</text>
</comment>
<evidence type="ECO:0000250" key="1"/>
<evidence type="ECO:0000255" key="2">
    <source>
        <dbReference type="HAMAP-Rule" id="MF_00223"/>
    </source>
</evidence>
<feature type="chain" id="PRO_1000058671" description="GTP cyclohydrolase 1">
    <location>
        <begin position="1"/>
        <end position="222"/>
    </location>
</feature>
<feature type="binding site" evidence="2">
    <location>
        <position position="111"/>
    </location>
    <ligand>
        <name>Zn(2+)</name>
        <dbReference type="ChEBI" id="CHEBI:29105"/>
    </ligand>
</feature>
<feature type="binding site" evidence="2">
    <location>
        <position position="114"/>
    </location>
    <ligand>
        <name>Zn(2+)</name>
        <dbReference type="ChEBI" id="CHEBI:29105"/>
    </ligand>
</feature>
<feature type="binding site" evidence="2">
    <location>
        <position position="182"/>
    </location>
    <ligand>
        <name>Zn(2+)</name>
        <dbReference type="ChEBI" id="CHEBI:29105"/>
    </ligand>
</feature>
<sequence>MPSLSKEAALVHEALVARGLETPLRPPVHEMDNETRKSLIAGHMTEIMQLLNLDLADDSLMETPHRIAKMYVDEIFSGLDYANFPKITLIENKMKVDEMVTVRDITLTSTCEHHFVTIDGKATVAYIPKDSVIGLSKINRIVQFFAQRPQVQERLTQQILIALQTLLGTNNVAVSIDAVHYCVKARGIRDATSATTTTSLGGLFKSSQNTRHEFLRAVRHHN</sequence>
<proteinExistence type="inferred from homology"/>
<accession>A7ZNX6</accession>